<feature type="chain" id="PRO_1000017949" description="Aspartate--ammonia ligase">
    <location>
        <begin position="1"/>
        <end position="330"/>
    </location>
</feature>
<reference key="1">
    <citation type="submission" date="2006-09" db="EMBL/GenBank/DDBJ databases">
        <authorList>
            <consortium name="The Klebsiella pneumonia Genome Sequencing Project"/>
            <person name="McClelland M."/>
            <person name="Sanderson E.K."/>
            <person name="Spieth J."/>
            <person name="Clifton W.S."/>
            <person name="Latreille P."/>
            <person name="Sabo A."/>
            <person name="Pepin K."/>
            <person name="Bhonagiri V."/>
            <person name="Porwollik S."/>
            <person name="Ali J."/>
            <person name="Wilson R.K."/>
        </authorList>
    </citation>
    <scope>NUCLEOTIDE SEQUENCE [LARGE SCALE GENOMIC DNA]</scope>
    <source>
        <strain>ATCC 700721 / MGH 78578</strain>
    </source>
</reference>
<proteinExistence type="inferred from homology"/>
<evidence type="ECO:0000255" key="1">
    <source>
        <dbReference type="HAMAP-Rule" id="MF_00555"/>
    </source>
</evidence>
<sequence>MKTAYIAKQRQISFVKSHFSRQLEEKLGLIEVQAPILSRVGDGTQDNLSGCEKAVQVKVKTLPDAQFEVVHSLAKWKRQTLGQHDFSAGEGLYTHMKALRPDEDRLTPIHSVYVDQWDWERVMGDEERHVGTLKATVEAIYAGIKATELAVSQEFGLTPFLPEQIHFVHSQELLSRYPELDAKGRERAIAKELGAVFLIGIGGKLADGKRHDVRAPDYDDWSTEVSEGFAGLNGDILVWNPVLEDAFEISSMGIRVDAEALKRQLALTGDEDRLKLEWHQALLRGEMPQTIGGGIGQSRLTMLLLQLDHIGQVQCGVWPAQVRESVSALL</sequence>
<name>ASNA_KLEP7</name>
<keyword id="KW-0028">Amino-acid biosynthesis</keyword>
<keyword id="KW-0061">Asparagine biosynthesis</keyword>
<keyword id="KW-0067">ATP-binding</keyword>
<keyword id="KW-0963">Cytoplasm</keyword>
<keyword id="KW-0436">Ligase</keyword>
<keyword id="KW-0547">Nucleotide-binding</keyword>
<comment type="catalytic activity">
    <reaction evidence="1">
        <text>L-aspartate + NH4(+) + ATP = L-asparagine + AMP + diphosphate + H(+)</text>
        <dbReference type="Rhea" id="RHEA:11372"/>
        <dbReference type="ChEBI" id="CHEBI:15378"/>
        <dbReference type="ChEBI" id="CHEBI:28938"/>
        <dbReference type="ChEBI" id="CHEBI:29991"/>
        <dbReference type="ChEBI" id="CHEBI:30616"/>
        <dbReference type="ChEBI" id="CHEBI:33019"/>
        <dbReference type="ChEBI" id="CHEBI:58048"/>
        <dbReference type="ChEBI" id="CHEBI:456215"/>
        <dbReference type="EC" id="6.3.1.1"/>
    </reaction>
</comment>
<comment type="pathway">
    <text evidence="1">Amino-acid biosynthesis; L-asparagine biosynthesis; L-asparagine from L-aspartate (ammonia route): step 1/1.</text>
</comment>
<comment type="subcellular location">
    <subcellularLocation>
        <location evidence="1">Cytoplasm</location>
    </subcellularLocation>
</comment>
<comment type="similarity">
    <text evidence="1">Belongs to the class-II aminoacyl-tRNA synthetase family. AsnA subfamily.</text>
</comment>
<organism>
    <name type="scientific">Klebsiella pneumoniae subsp. pneumoniae (strain ATCC 700721 / MGH 78578)</name>
    <dbReference type="NCBI Taxonomy" id="272620"/>
    <lineage>
        <taxon>Bacteria</taxon>
        <taxon>Pseudomonadati</taxon>
        <taxon>Pseudomonadota</taxon>
        <taxon>Gammaproteobacteria</taxon>
        <taxon>Enterobacterales</taxon>
        <taxon>Enterobacteriaceae</taxon>
        <taxon>Klebsiella/Raoultella group</taxon>
        <taxon>Klebsiella</taxon>
        <taxon>Klebsiella pneumoniae complex</taxon>
    </lineage>
</organism>
<gene>
    <name evidence="1" type="primary">asnA</name>
    <name type="ordered locus">KPN78578_41080</name>
    <name type="ORF">KPN_04149</name>
</gene>
<protein>
    <recommendedName>
        <fullName evidence="1">Aspartate--ammonia ligase</fullName>
        <ecNumber evidence="1">6.3.1.1</ecNumber>
    </recommendedName>
    <alternativeName>
        <fullName evidence="1">Asparagine synthetase A</fullName>
    </alternativeName>
</protein>
<accession>A6TG48</accession>
<dbReference type="EC" id="6.3.1.1" evidence="1"/>
<dbReference type="EMBL" id="CP000647">
    <property type="protein sequence ID" value="ABR79532.1"/>
    <property type="molecule type" value="Genomic_DNA"/>
</dbReference>
<dbReference type="RefSeq" id="WP_002882514.1">
    <property type="nucleotide sequence ID" value="NC_009648.1"/>
</dbReference>
<dbReference type="SMR" id="A6TG48"/>
<dbReference type="STRING" id="272620.KPN_04149"/>
<dbReference type="PaxDb" id="272620-KPN_04149"/>
<dbReference type="EnsemblBacteria" id="ABR79532">
    <property type="protein sequence ID" value="ABR79532"/>
    <property type="gene ID" value="KPN_04149"/>
</dbReference>
<dbReference type="KEGG" id="kpn:KPN_04149"/>
<dbReference type="HOGENOM" id="CLU_071543_0_0_6"/>
<dbReference type="UniPathway" id="UPA00134">
    <property type="reaction ID" value="UER00194"/>
</dbReference>
<dbReference type="Proteomes" id="UP000000265">
    <property type="component" value="Chromosome"/>
</dbReference>
<dbReference type="GO" id="GO:0005829">
    <property type="term" value="C:cytosol"/>
    <property type="evidence" value="ECO:0007669"/>
    <property type="project" value="TreeGrafter"/>
</dbReference>
<dbReference type="GO" id="GO:0004071">
    <property type="term" value="F:aspartate-ammonia ligase activity"/>
    <property type="evidence" value="ECO:0007669"/>
    <property type="project" value="UniProtKB-UniRule"/>
</dbReference>
<dbReference type="GO" id="GO:0005524">
    <property type="term" value="F:ATP binding"/>
    <property type="evidence" value="ECO:0007669"/>
    <property type="project" value="UniProtKB-UniRule"/>
</dbReference>
<dbReference type="GO" id="GO:0070981">
    <property type="term" value="P:L-asparagine biosynthetic process"/>
    <property type="evidence" value="ECO:0007669"/>
    <property type="project" value="UniProtKB-UniRule"/>
</dbReference>
<dbReference type="CDD" id="cd00645">
    <property type="entry name" value="AsnA"/>
    <property type="match status" value="1"/>
</dbReference>
<dbReference type="Gene3D" id="3.30.930.10">
    <property type="entry name" value="Bira Bifunctional Protein, Domain 2"/>
    <property type="match status" value="1"/>
</dbReference>
<dbReference type="HAMAP" id="MF_00555">
    <property type="entry name" value="AsnA"/>
    <property type="match status" value="1"/>
</dbReference>
<dbReference type="InterPro" id="IPR006195">
    <property type="entry name" value="aa-tRNA-synth_II"/>
</dbReference>
<dbReference type="InterPro" id="IPR045864">
    <property type="entry name" value="aa-tRNA-synth_II/BPL/LPL"/>
</dbReference>
<dbReference type="InterPro" id="IPR004618">
    <property type="entry name" value="AsnA"/>
</dbReference>
<dbReference type="NCBIfam" id="TIGR00669">
    <property type="entry name" value="asnA"/>
    <property type="match status" value="1"/>
</dbReference>
<dbReference type="PANTHER" id="PTHR30073">
    <property type="entry name" value="ASPARTATE--AMMONIA LIGASE"/>
    <property type="match status" value="1"/>
</dbReference>
<dbReference type="PANTHER" id="PTHR30073:SF5">
    <property type="entry name" value="ASPARTATE--AMMONIA LIGASE"/>
    <property type="match status" value="1"/>
</dbReference>
<dbReference type="Pfam" id="PF03590">
    <property type="entry name" value="AsnA"/>
    <property type="match status" value="1"/>
</dbReference>
<dbReference type="PIRSF" id="PIRSF001555">
    <property type="entry name" value="Asp_ammon_ligase"/>
    <property type="match status" value="1"/>
</dbReference>
<dbReference type="SUPFAM" id="SSF55681">
    <property type="entry name" value="Class II aaRS and biotin synthetases"/>
    <property type="match status" value="1"/>
</dbReference>
<dbReference type="PROSITE" id="PS50862">
    <property type="entry name" value="AA_TRNA_LIGASE_II"/>
    <property type="match status" value="1"/>
</dbReference>